<keyword id="KW-0067">ATP-binding</keyword>
<keyword id="KW-1283">Bacterial microcompartment</keyword>
<keyword id="KW-0418">Kinase</keyword>
<keyword id="KW-0547">Nucleotide-binding</keyword>
<keyword id="KW-1185">Reference proteome</keyword>
<keyword id="KW-0808">Transferase</keyword>
<keyword id="KW-0843">Virulence</keyword>
<gene>
    <name type="primary">eutP</name>
    <name type="ordered locus">STM2469</name>
</gene>
<proteinExistence type="evidence at protein level"/>
<dbReference type="EC" id="2.7.2.1" evidence="4"/>
<dbReference type="EMBL" id="AF093749">
    <property type="protein sequence ID" value="AAC78112.1"/>
    <property type="molecule type" value="Genomic_DNA"/>
</dbReference>
<dbReference type="EMBL" id="AE006468">
    <property type="protein sequence ID" value="AAL21363.1"/>
    <property type="molecule type" value="Genomic_DNA"/>
</dbReference>
<dbReference type="RefSeq" id="NP_461404.1">
    <property type="nucleotide sequence ID" value="NC_003197.2"/>
</dbReference>
<dbReference type="RefSeq" id="WP_000820751.1">
    <property type="nucleotide sequence ID" value="NC_003197.2"/>
</dbReference>
<dbReference type="SMR" id="P0A208"/>
<dbReference type="STRING" id="99287.STM2469"/>
<dbReference type="PaxDb" id="99287-STM2469"/>
<dbReference type="GeneID" id="1253991"/>
<dbReference type="KEGG" id="stm:STM2469"/>
<dbReference type="PATRIC" id="fig|99287.12.peg.2607"/>
<dbReference type="HOGENOM" id="CLU_113298_2_0_6"/>
<dbReference type="OMA" id="PGEYMEN"/>
<dbReference type="PhylomeDB" id="P0A208"/>
<dbReference type="BioCyc" id="MetaCyc:STM2469-MONOMER"/>
<dbReference type="BioCyc" id="SENT99287:STM2469-MONOMER"/>
<dbReference type="UniPathway" id="UPA00560"/>
<dbReference type="Proteomes" id="UP000001014">
    <property type="component" value="Chromosome"/>
</dbReference>
<dbReference type="GO" id="GO:0031469">
    <property type="term" value="C:bacterial microcompartment"/>
    <property type="evidence" value="ECO:0007669"/>
    <property type="project" value="UniProtKB-SubCell"/>
</dbReference>
<dbReference type="GO" id="GO:0008776">
    <property type="term" value="F:acetate kinase activity"/>
    <property type="evidence" value="ECO:0007669"/>
    <property type="project" value="UniProtKB-EC"/>
</dbReference>
<dbReference type="GO" id="GO:0005524">
    <property type="term" value="F:ATP binding"/>
    <property type="evidence" value="ECO:0007669"/>
    <property type="project" value="UniProtKB-KW"/>
</dbReference>
<dbReference type="GO" id="GO:0046336">
    <property type="term" value="P:ethanolamine catabolic process"/>
    <property type="evidence" value="ECO:0007669"/>
    <property type="project" value="UniProtKB-UniPathway"/>
</dbReference>
<dbReference type="GO" id="GO:0006091">
    <property type="term" value="P:generation of precursor metabolites and energy"/>
    <property type="evidence" value="ECO:0000304"/>
    <property type="project" value="UniProtKB"/>
</dbReference>
<dbReference type="CDD" id="cd00882">
    <property type="entry name" value="Ras_like_GTPase"/>
    <property type="match status" value="1"/>
</dbReference>
<dbReference type="Gene3D" id="3.40.50.300">
    <property type="entry name" value="P-loop containing nucleotide triphosphate hydrolases"/>
    <property type="match status" value="1"/>
</dbReference>
<dbReference type="InterPro" id="IPR012381">
    <property type="entry name" value="EutP_PduV"/>
</dbReference>
<dbReference type="InterPro" id="IPR027417">
    <property type="entry name" value="P-loop_NTPase"/>
</dbReference>
<dbReference type="NCBIfam" id="TIGR02528">
    <property type="entry name" value="EutP"/>
    <property type="match status" value="1"/>
</dbReference>
<dbReference type="NCBIfam" id="NF012011">
    <property type="entry name" value="PRK15467.1"/>
    <property type="match status" value="1"/>
</dbReference>
<dbReference type="PANTHER" id="PTHR40453:SF2">
    <property type="entry name" value="ACETATE KINASE EUTP-RELATED"/>
    <property type="match status" value="1"/>
</dbReference>
<dbReference type="PANTHER" id="PTHR40453">
    <property type="entry name" value="PROTEIN YOEF"/>
    <property type="match status" value="1"/>
</dbReference>
<dbReference type="Pfam" id="PF10662">
    <property type="entry name" value="PduV-EutP"/>
    <property type="match status" value="1"/>
</dbReference>
<dbReference type="PIRSF" id="PIRSF036409">
    <property type="entry name" value="EutP_PduV"/>
    <property type="match status" value="1"/>
</dbReference>
<dbReference type="SUPFAM" id="SSF52540">
    <property type="entry name" value="P-loop containing nucleoside triphosphate hydrolases"/>
    <property type="match status" value="1"/>
</dbReference>
<feature type="chain" id="PRO_0000087096" description="Probable acetate kinase EutP">
    <location>
        <begin position="1"/>
        <end position="159"/>
    </location>
</feature>
<feature type="binding site" evidence="1">
    <location>
        <begin position="8"/>
        <end position="15"/>
    </location>
    <ligand>
        <name>ATP</name>
        <dbReference type="ChEBI" id="CHEBI:30616"/>
    </ligand>
</feature>
<accession>P0A208</accession>
<accession>Q9ZFV6</accession>
<evidence type="ECO:0000255" key="1"/>
<evidence type="ECO:0000269" key="2">
    <source>
    </source>
</evidence>
<evidence type="ECO:0000269" key="3">
    <source>
    </source>
</evidence>
<evidence type="ECO:0000269" key="4">
    <source>
    </source>
</evidence>
<evidence type="ECO:0000269" key="5">
    <source>
    </source>
</evidence>
<evidence type="ECO:0000269" key="6">
    <source>
    </source>
</evidence>
<evidence type="ECO:0000269" key="7">
    <source>
    </source>
</evidence>
<evidence type="ECO:0000303" key="8">
    <source>
    </source>
</evidence>
<evidence type="ECO:0000305" key="9"/>
<evidence type="ECO:0000305" key="10">
    <source>
    </source>
</evidence>
<organism>
    <name type="scientific">Salmonella typhimurium (strain LT2 / SGSC1412 / ATCC 700720)</name>
    <dbReference type="NCBI Taxonomy" id="99287"/>
    <lineage>
        <taxon>Bacteria</taxon>
        <taxon>Pseudomonadati</taxon>
        <taxon>Pseudomonadota</taxon>
        <taxon>Gammaproteobacteria</taxon>
        <taxon>Enterobacterales</taxon>
        <taxon>Enterobacteriaceae</taxon>
        <taxon>Salmonella</taxon>
    </lineage>
</organism>
<sequence>MKRIAFVGAVGAGKTTLFNALRGNYSLARKTQAVEFNDHGDIDTPGEYFSHPRWYHALITTLQDVDTLIYVHAANDKESRLPAGLLDVGTRKRHIAVISKTDMPDADVAATRQLLCEIGFREPIFELNGHDPQSVRQLVDYLAALSEQEEEAGEKTYHS</sequence>
<protein>
    <recommendedName>
        <fullName evidence="8">Probable acetate kinase EutP</fullName>
        <ecNumber evidence="4">2.7.2.1</ecNumber>
    </recommendedName>
    <alternativeName>
        <fullName>Ethanolamine utilization protein EutP</fullName>
    </alternativeName>
</protein>
<reference key="1">
    <citation type="journal article" date="1999" name="J. Bacteriol.">
        <title>The 17-gene ethanolamine (eut) operon of Salmonella typhimurium encodes five homologues of carboxysome shell proteins.</title>
        <authorList>
            <person name="Kofoid E.C."/>
            <person name="Rappleye C.A."/>
            <person name="Stojiljkovic I."/>
            <person name="Roth J.R."/>
        </authorList>
    </citation>
    <scope>NUCLEOTIDE SEQUENCE [GENOMIC DNA]</scope>
    <scope>DISRUPTION PHENOTYPE</scope>
    <source>
        <strain>LT2</strain>
    </source>
</reference>
<reference key="2">
    <citation type="journal article" date="2001" name="Nature">
        <title>Complete genome sequence of Salmonella enterica serovar Typhimurium LT2.</title>
        <authorList>
            <person name="McClelland M."/>
            <person name="Sanderson K.E."/>
            <person name="Spieth J."/>
            <person name="Clifton S.W."/>
            <person name="Latreille P."/>
            <person name="Courtney L."/>
            <person name="Porwollik S."/>
            <person name="Ali J."/>
            <person name="Dante M."/>
            <person name="Du F."/>
            <person name="Hou S."/>
            <person name="Layman D."/>
            <person name="Leonard S."/>
            <person name="Nguyen C."/>
            <person name="Scott K."/>
            <person name="Holmes A."/>
            <person name="Grewal N."/>
            <person name="Mulvaney E."/>
            <person name="Ryan E."/>
            <person name="Sun H."/>
            <person name="Florea L."/>
            <person name="Miller W."/>
            <person name="Stoneking T."/>
            <person name="Nhan M."/>
            <person name="Waterston R."/>
            <person name="Wilson R.K."/>
        </authorList>
    </citation>
    <scope>NUCLEOTIDE SEQUENCE [LARGE SCALE GENOMIC DNA]</scope>
    <source>
        <strain>LT2 / SGSC1412 / ATCC 700720</strain>
    </source>
</reference>
<reference key="3">
    <citation type="journal article" date="1988" name="J. Bacteriol.">
        <title>Ethanolamine utilization in Salmonella typhimurium.</title>
        <authorList>
            <person name="Roof D.M."/>
            <person name="Roth J.R."/>
        </authorList>
    </citation>
    <scope>FUNCTION</scope>
    <scope>PATHWAY</scope>
    <scope>OPERON</scope>
    <scope>INDUCTION BY ETHANOLAMINE AND COBALAMIN</scope>
    <source>
        <strain>LT2</strain>
    </source>
</reference>
<reference key="4">
    <citation type="journal article" date="2006" name="J. Bacteriol.">
        <title>Conserving a volatile metabolite: a role for carboxysome-like organelles in Salmonella enterica.</title>
        <authorList>
            <person name="Penrod J.T."/>
            <person name="Roth J.R."/>
        </authorList>
    </citation>
    <scope>DISRUPTION PHENOTYPE</scope>
    <source>
        <strain>LT2</strain>
    </source>
</reference>
<reference key="5">
    <citation type="journal article" date="2016" name="Mol. Microbiol.">
        <title>The EutQ and EutP proteins are novel acetate kinases involved in ethanolamine catabolism: physiological implications for the function of the ethanolamine metabolosome in Salmonella enterica.</title>
        <authorList>
            <person name="Moore T.C."/>
            <person name="Escalante-Semerena J.C."/>
        </authorList>
    </citation>
    <scope>POSSIBLE FUNCTION</scope>
    <scope>CATALYTIC ACTIVITY</scope>
    <scope>SUBSTRATE SPECIFICITY</scope>
    <scope>NO COFACTOR</scope>
    <scope>BIOPHYSICOCHEMICAL PROPERTIES</scope>
    <scope>SUBCELLULAR LOCATION</scope>
    <scope>DISRUPTION PHENOTYPE</scope>
    <source>
        <strain>LT2</strain>
    </source>
</reference>
<reference key="6">
    <citation type="journal article" date="2016" name="Sci. Rep.">
        <title>Engineering formation of multiple recombinant Eut protein nanocompartments in E. coli.</title>
        <authorList>
            <person name="Held M."/>
            <person name="Kolb A."/>
            <person name="Perdue S."/>
            <person name="Hsu S.Y."/>
            <person name="Bloch S.E."/>
            <person name="Quin M.B."/>
            <person name="Schmidt-Dannert C."/>
        </authorList>
    </citation>
    <scope>FUNCTION</scope>
    <source>
        <strain>LT2</strain>
    </source>
</reference>
<reference key="7">
    <citation type="journal article" date="2018" name="Infect. Immun.">
        <title>The Ethanolamine Permease EutH Promotes Vacuole Adaptation of Salmonella enterica and Listeria monocytogenes during Macrophage Infection.</title>
        <authorList>
            <person name="Anderson C.J."/>
            <person name="Satkovich J."/>
            <person name="Koeseoglu V.K."/>
            <person name="Agaisse H."/>
            <person name="Kendall M.M."/>
        </authorList>
    </citation>
    <scope>FUNCTION</scope>
    <source>
        <strain>SL1344</strain>
    </source>
</reference>
<name>EUTP_SALTY</name>
<comment type="function">
    <text evidence="4 5">A putative bidirectional acetate kinase that may drive flux through the ethanolamine (EA) degradation pathway under anoxic conditions found when this bacteria infects host intestine. It may generate ATP that can be used by other enzymes (EutA and EutT) in the eut pathway. Can use GTP instead of ATP with reduced efficiency (PubMed:26448059). Overexpression in E.coli yields elongated protein sheets; prevents artificial BMC formation by eutS alone or by eutK, eutL, eutM, eutN, eutS in E.coli (PubMed:27063436).</text>
</comment>
<comment type="function">
    <text evidence="6 7">Expression of the eut operon allows this bacteria to use ethanolamine (EA) as a carbon, nitrogen and energy source. It relies on cobalamin (vitamin B12) both as a cofactor for the ethanolamine ammonia-lyase (EAL) activity and to induce the operon (PubMed:3045078). EA enhances bacterial survival in macrophages in a concentration-dependent manner, suggesting it is an important nutrient during infection (PubMed:29531136).</text>
</comment>
<comment type="catalytic activity">
    <reaction evidence="4">
        <text>acetate + ATP = acetyl phosphate + ADP</text>
        <dbReference type="Rhea" id="RHEA:11352"/>
        <dbReference type="ChEBI" id="CHEBI:22191"/>
        <dbReference type="ChEBI" id="CHEBI:30089"/>
        <dbReference type="ChEBI" id="CHEBI:30616"/>
        <dbReference type="ChEBI" id="CHEBI:456216"/>
        <dbReference type="EC" id="2.7.2.1"/>
    </reaction>
    <physiologicalReaction direction="left-to-right" evidence="4">
        <dbReference type="Rhea" id="RHEA:11353"/>
    </physiologicalReaction>
    <physiologicalReaction direction="right-to-left" evidence="4">
        <dbReference type="Rhea" id="RHEA:11354"/>
    </physiologicalReaction>
</comment>
<comment type="cofactor">
    <text evidence="4">Does not need divalent cations.</text>
</comment>
<comment type="biophysicochemical properties">
    <kinetics>
        <KM evidence="4">0.7 mM for acetate</KM>
        <KM evidence="4">0.5 mM for ATP</KM>
        <text evidence="4">kcat is 545 sec(-1).</text>
    </kinetics>
</comment>
<comment type="pathway">
    <text evidence="7">Amine and polyamine degradation; ethanolamine degradation.</text>
</comment>
<comment type="subcellular location">
    <subcellularLocation>
        <location evidence="10">Bacterial microcompartment</location>
    </subcellularLocation>
</comment>
<comment type="induction">
    <text evidence="7">Part of the 17-gene eut operon transcribed from a single promoter, induced by ethanolamine and adenosylcobalamin (AdoCbl, vitamin B12).</text>
</comment>
<comment type="disruption phenotype">
    <text evidence="2 3 4">Not required for aerobic growth on ethanolamine (EA) supplemented with cobalamin (vitamin B12). A quadruple eutP-eutQ-eutT-eutD deletion is also not required for growth in the above conditions (PubMed:10464203). A non-polar deletion mutant grows on EA from pH 5.5 to pH 8.0, but does not grow at pH 8.5, releases slightly increased amounts of acetaldehyde on EA plus vitamin B12 (PubMed:16585748). No visible phenotype when grown on EA and tetrathionate under anoxic conditions (PubMed:26448059).</text>
</comment>
<comment type="similarity">
    <text evidence="9">Belongs to the EutP/PduV family.</text>
</comment>